<accession>B7M6W9</accession>
<proteinExistence type="inferred from homology"/>
<protein>
    <recommendedName>
        <fullName evidence="1">CDP-diacylglycerol pyrophosphatase</fullName>
        <ecNumber evidence="1">3.6.1.26</ecNumber>
    </recommendedName>
    <alternativeName>
        <fullName evidence="1">CDP-diacylglycerol phosphatidylhydrolase</fullName>
    </alternativeName>
    <alternativeName>
        <fullName evidence="1">CDP-diglyceride hydrolase</fullName>
    </alternativeName>
</protein>
<reference key="1">
    <citation type="journal article" date="2009" name="PLoS Genet.">
        <title>Organised genome dynamics in the Escherichia coli species results in highly diverse adaptive paths.</title>
        <authorList>
            <person name="Touchon M."/>
            <person name="Hoede C."/>
            <person name="Tenaillon O."/>
            <person name="Barbe V."/>
            <person name="Baeriswyl S."/>
            <person name="Bidet P."/>
            <person name="Bingen E."/>
            <person name="Bonacorsi S."/>
            <person name="Bouchier C."/>
            <person name="Bouvet O."/>
            <person name="Calteau A."/>
            <person name="Chiapello H."/>
            <person name="Clermont O."/>
            <person name="Cruveiller S."/>
            <person name="Danchin A."/>
            <person name="Diard M."/>
            <person name="Dossat C."/>
            <person name="Karoui M.E."/>
            <person name="Frapy E."/>
            <person name="Garry L."/>
            <person name="Ghigo J.M."/>
            <person name="Gilles A.M."/>
            <person name="Johnson J."/>
            <person name="Le Bouguenec C."/>
            <person name="Lescat M."/>
            <person name="Mangenot S."/>
            <person name="Martinez-Jehanne V."/>
            <person name="Matic I."/>
            <person name="Nassif X."/>
            <person name="Oztas S."/>
            <person name="Petit M.A."/>
            <person name="Pichon C."/>
            <person name="Rouy Z."/>
            <person name="Ruf C.S."/>
            <person name="Schneider D."/>
            <person name="Tourret J."/>
            <person name="Vacherie B."/>
            <person name="Vallenet D."/>
            <person name="Medigue C."/>
            <person name="Rocha E.P.C."/>
            <person name="Denamur E."/>
        </authorList>
    </citation>
    <scope>NUCLEOTIDE SEQUENCE [LARGE SCALE GENOMIC DNA]</scope>
    <source>
        <strain>IAI1</strain>
    </source>
</reference>
<sequence>MKKAGLLFLVMIVIAVVASGIGYWKLTGEESDTLRKIVLEECLPNQQQNQNPSPCAEVKPNAGYVVLKDLNGPLQYLLMPTYRINGTESPLLTDPSTPNFFWLAWQARDFMSKKYGQPVPDRAVSLAINSRTGRTQNHFHIHISCIRPDVREQLDKNLANISSRWLPLPGGLRGHEYLARRVTESELVQRSPFMMLAEEVPEAREHMGSYGLAMVRQSDNSFVLLATQRNLLTLNRASAEEIQDHECEILR</sequence>
<name>CDH_ECO8A</name>
<organism>
    <name type="scientific">Escherichia coli O8 (strain IAI1)</name>
    <dbReference type="NCBI Taxonomy" id="585034"/>
    <lineage>
        <taxon>Bacteria</taxon>
        <taxon>Pseudomonadati</taxon>
        <taxon>Pseudomonadota</taxon>
        <taxon>Gammaproteobacteria</taxon>
        <taxon>Enterobacterales</taxon>
        <taxon>Enterobacteriaceae</taxon>
        <taxon>Escherichia</taxon>
    </lineage>
</organism>
<gene>
    <name evidence="1" type="primary">cdh</name>
    <name type="ordered locus">ECIAI1_4123</name>
</gene>
<keyword id="KW-0997">Cell inner membrane</keyword>
<keyword id="KW-1003">Cell membrane</keyword>
<keyword id="KW-0378">Hydrolase</keyword>
<keyword id="KW-0444">Lipid biosynthesis</keyword>
<keyword id="KW-0443">Lipid metabolism</keyword>
<keyword id="KW-0472">Membrane</keyword>
<keyword id="KW-0594">Phospholipid biosynthesis</keyword>
<keyword id="KW-1208">Phospholipid metabolism</keyword>
<keyword id="KW-0812">Transmembrane</keyword>
<keyword id="KW-1133">Transmembrane helix</keyword>
<dbReference type="EC" id="3.6.1.26" evidence="1"/>
<dbReference type="EMBL" id="CU928160">
    <property type="protein sequence ID" value="CAR00894.1"/>
    <property type="molecule type" value="Genomic_DNA"/>
</dbReference>
<dbReference type="RefSeq" id="WP_001365904.1">
    <property type="nucleotide sequence ID" value="NC_011741.1"/>
</dbReference>
<dbReference type="SMR" id="B7M6W9"/>
<dbReference type="KEGG" id="ecr:ECIAI1_4123"/>
<dbReference type="HOGENOM" id="CLU_077117_0_1_6"/>
<dbReference type="UniPathway" id="UPA00609">
    <property type="reaction ID" value="UER00664"/>
</dbReference>
<dbReference type="GO" id="GO:0005886">
    <property type="term" value="C:plasma membrane"/>
    <property type="evidence" value="ECO:0007669"/>
    <property type="project" value="UniProtKB-SubCell"/>
</dbReference>
<dbReference type="GO" id="GO:0008715">
    <property type="term" value="F:CDP-diacylglycerol diphosphatase activity"/>
    <property type="evidence" value="ECO:0007669"/>
    <property type="project" value="UniProtKB-UniRule"/>
</dbReference>
<dbReference type="GO" id="GO:0046342">
    <property type="term" value="P:CDP-diacylglycerol catabolic process"/>
    <property type="evidence" value="ECO:0007669"/>
    <property type="project" value="UniProtKB-UniRule"/>
</dbReference>
<dbReference type="GO" id="GO:0008654">
    <property type="term" value="P:phospholipid biosynthetic process"/>
    <property type="evidence" value="ECO:0007669"/>
    <property type="project" value="UniProtKB-KW"/>
</dbReference>
<dbReference type="FunFam" id="3.30.428.30:FF:000001">
    <property type="entry name" value="CDP-diacylglycerol pyrophosphatase"/>
    <property type="match status" value="1"/>
</dbReference>
<dbReference type="Gene3D" id="3.30.428.30">
    <property type="entry name" value="HIT family - CDH-like"/>
    <property type="match status" value="1"/>
</dbReference>
<dbReference type="HAMAP" id="MF_00319">
    <property type="entry name" value="Cdh"/>
    <property type="match status" value="1"/>
</dbReference>
<dbReference type="InterPro" id="IPR003763">
    <property type="entry name" value="CDP-diacylglyc_Pase"/>
</dbReference>
<dbReference type="InterPro" id="IPR015993">
    <property type="entry name" value="CDP-diacylglyc_Pase_proteobac"/>
</dbReference>
<dbReference type="InterPro" id="IPR036265">
    <property type="entry name" value="HIT-like_sf"/>
</dbReference>
<dbReference type="NCBIfam" id="TIGR00672">
    <property type="entry name" value="cdh"/>
    <property type="match status" value="1"/>
</dbReference>
<dbReference type="NCBIfam" id="NF003986">
    <property type="entry name" value="PRK05471.1-5"/>
    <property type="match status" value="1"/>
</dbReference>
<dbReference type="NCBIfam" id="NF003987">
    <property type="entry name" value="PRK05471.1-6"/>
    <property type="match status" value="1"/>
</dbReference>
<dbReference type="Pfam" id="PF02611">
    <property type="entry name" value="CDH"/>
    <property type="match status" value="1"/>
</dbReference>
<dbReference type="PIRSF" id="PIRSF001273">
    <property type="entry name" value="CDH"/>
    <property type="match status" value="1"/>
</dbReference>
<dbReference type="SUPFAM" id="SSF54197">
    <property type="entry name" value="HIT-like"/>
    <property type="match status" value="1"/>
</dbReference>
<comment type="catalytic activity">
    <reaction evidence="1">
        <text>a CDP-1,2-diacyl-sn-glycerol + H2O = a 1,2-diacyl-sn-glycero-3-phosphate + CMP + 2 H(+)</text>
        <dbReference type="Rhea" id="RHEA:15221"/>
        <dbReference type="ChEBI" id="CHEBI:15377"/>
        <dbReference type="ChEBI" id="CHEBI:15378"/>
        <dbReference type="ChEBI" id="CHEBI:58332"/>
        <dbReference type="ChEBI" id="CHEBI:58608"/>
        <dbReference type="ChEBI" id="CHEBI:60377"/>
        <dbReference type="EC" id="3.6.1.26"/>
    </reaction>
</comment>
<comment type="pathway">
    <text evidence="1">Phospholipid metabolism; CDP-diacylglycerol degradation; phosphatidate from CDP-diacylglycerol: step 1/1.</text>
</comment>
<comment type="subcellular location">
    <subcellularLocation>
        <location evidence="1">Cell inner membrane</location>
        <topology evidence="1">Single-pass membrane protein</topology>
    </subcellularLocation>
</comment>
<comment type="similarity">
    <text evidence="1">Belongs to the Cdh family.</text>
</comment>
<evidence type="ECO:0000255" key="1">
    <source>
        <dbReference type="HAMAP-Rule" id="MF_00319"/>
    </source>
</evidence>
<feature type="chain" id="PRO_1000119585" description="CDP-diacylglycerol pyrophosphatase">
    <location>
        <begin position="1"/>
        <end position="251"/>
    </location>
</feature>
<feature type="transmembrane region" description="Helical" evidence="1">
    <location>
        <begin position="4"/>
        <end position="24"/>
    </location>
</feature>